<feature type="chain" id="PRO_1000098939" description="4-hydroxy-3-methylbut-2-enyl diphosphate reductase">
    <location>
        <begin position="1"/>
        <end position="307"/>
    </location>
</feature>
<feature type="active site" description="Proton donor" evidence="1">
    <location>
        <position position="127"/>
    </location>
</feature>
<feature type="binding site" evidence="1">
    <location>
        <position position="13"/>
    </location>
    <ligand>
        <name>[4Fe-4S] cluster</name>
        <dbReference type="ChEBI" id="CHEBI:49883"/>
    </ligand>
</feature>
<feature type="binding site" evidence="1">
    <location>
        <position position="42"/>
    </location>
    <ligand>
        <name>(2E)-4-hydroxy-3-methylbut-2-enyl diphosphate</name>
        <dbReference type="ChEBI" id="CHEBI:128753"/>
    </ligand>
</feature>
<feature type="binding site" evidence="1">
    <location>
        <position position="42"/>
    </location>
    <ligand>
        <name>dimethylallyl diphosphate</name>
        <dbReference type="ChEBI" id="CHEBI:57623"/>
    </ligand>
</feature>
<feature type="binding site" evidence="1">
    <location>
        <position position="42"/>
    </location>
    <ligand>
        <name>isopentenyl diphosphate</name>
        <dbReference type="ChEBI" id="CHEBI:128769"/>
    </ligand>
</feature>
<feature type="binding site" evidence="1">
    <location>
        <position position="75"/>
    </location>
    <ligand>
        <name>(2E)-4-hydroxy-3-methylbut-2-enyl diphosphate</name>
        <dbReference type="ChEBI" id="CHEBI:128753"/>
    </ligand>
</feature>
<feature type="binding site" evidence="1">
    <location>
        <position position="75"/>
    </location>
    <ligand>
        <name>dimethylallyl diphosphate</name>
        <dbReference type="ChEBI" id="CHEBI:57623"/>
    </ligand>
</feature>
<feature type="binding site" evidence="1">
    <location>
        <position position="75"/>
    </location>
    <ligand>
        <name>isopentenyl diphosphate</name>
        <dbReference type="ChEBI" id="CHEBI:128769"/>
    </ligand>
</feature>
<feature type="binding site" evidence="1">
    <location>
        <position position="97"/>
    </location>
    <ligand>
        <name>[4Fe-4S] cluster</name>
        <dbReference type="ChEBI" id="CHEBI:49883"/>
    </ligand>
</feature>
<feature type="binding site" evidence="1">
    <location>
        <position position="125"/>
    </location>
    <ligand>
        <name>(2E)-4-hydroxy-3-methylbut-2-enyl diphosphate</name>
        <dbReference type="ChEBI" id="CHEBI:128753"/>
    </ligand>
</feature>
<feature type="binding site" evidence="1">
    <location>
        <position position="125"/>
    </location>
    <ligand>
        <name>dimethylallyl diphosphate</name>
        <dbReference type="ChEBI" id="CHEBI:57623"/>
    </ligand>
</feature>
<feature type="binding site" evidence="1">
    <location>
        <position position="125"/>
    </location>
    <ligand>
        <name>isopentenyl diphosphate</name>
        <dbReference type="ChEBI" id="CHEBI:128769"/>
    </ligand>
</feature>
<feature type="binding site" evidence="1">
    <location>
        <position position="165"/>
    </location>
    <ligand>
        <name>(2E)-4-hydroxy-3-methylbut-2-enyl diphosphate</name>
        <dbReference type="ChEBI" id="CHEBI:128753"/>
    </ligand>
</feature>
<feature type="binding site" evidence="1">
    <location>
        <position position="195"/>
    </location>
    <ligand>
        <name>[4Fe-4S] cluster</name>
        <dbReference type="ChEBI" id="CHEBI:49883"/>
    </ligand>
</feature>
<feature type="binding site" evidence="1">
    <location>
        <position position="223"/>
    </location>
    <ligand>
        <name>(2E)-4-hydroxy-3-methylbut-2-enyl diphosphate</name>
        <dbReference type="ChEBI" id="CHEBI:128753"/>
    </ligand>
</feature>
<feature type="binding site" evidence="1">
    <location>
        <position position="223"/>
    </location>
    <ligand>
        <name>dimethylallyl diphosphate</name>
        <dbReference type="ChEBI" id="CHEBI:57623"/>
    </ligand>
</feature>
<feature type="binding site" evidence="1">
    <location>
        <position position="223"/>
    </location>
    <ligand>
        <name>isopentenyl diphosphate</name>
        <dbReference type="ChEBI" id="CHEBI:128769"/>
    </ligand>
</feature>
<feature type="binding site" evidence="1">
    <location>
        <position position="224"/>
    </location>
    <ligand>
        <name>(2E)-4-hydroxy-3-methylbut-2-enyl diphosphate</name>
        <dbReference type="ChEBI" id="CHEBI:128753"/>
    </ligand>
</feature>
<feature type="binding site" evidence="1">
    <location>
        <position position="224"/>
    </location>
    <ligand>
        <name>dimethylallyl diphosphate</name>
        <dbReference type="ChEBI" id="CHEBI:57623"/>
    </ligand>
</feature>
<feature type="binding site" evidence="1">
    <location>
        <position position="224"/>
    </location>
    <ligand>
        <name>isopentenyl diphosphate</name>
        <dbReference type="ChEBI" id="CHEBI:128769"/>
    </ligand>
</feature>
<feature type="binding site" evidence="1">
    <location>
        <position position="225"/>
    </location>
    <ligand>
        <name>(2E)-4-hydroxy-3-methylbut-2-enyl diphosphate</name>
        <dbReference type="ChEBI" id="CHEBI:128753"/>
    </ligand>
</feature>
<feature type="binding site" evidence="1">
    <location>
        <position position="225"/>
    </location>
    <ligand>
        <name>dimethylallyl diphosphate</name>
        <dbReference type="ChEBI" id="CHEBI:57623"/>
    </ligand>
</feature>
<feature type="binding site" evidence="1">
    <location>
        <position position="225"/>
    </location>
    <ligand>
        <name>isopentenyl diphosphate</name>
        <dbReference type="ChEBI" id="CHEBI:128769"/>
    </ligand>
</feature>
<feature type="binding site" evidence="1">
    <location>
        <position position="267"/>
    </location>
    <ligand>
        <name>(2E)-4-hydroxy-3-methylbut-2-enyl diphosphate</name>
        <dbReference type="ChEBI" id="CHEBI:128753"/>
    </ligand>
</feature>
<feature type="binding site" evidence="1">
    <location>
        <position position="267"/>
    </location>
    <ligand>
        <name>dimethylallyl diphosphate</name>
        <dbReference type="ChEBI" id="CHEBI:57623"/>
    </ligand>
</feature>
<feature type="binding site" evidence="1">
    <location>
        <position position="267"/>
    </location>
    <ligand>
        <name>isopentenyl diphosphate</name>
        <dbReference type="ChEBI" id="CHEBI:128769"/>
    </ligand>
</feature>
<reference key="1">
    <citation type="journal article" date="2008" name="Genome Res.">
        <title>Chlamydia trachomatis: genome sequence analysis of lymphogranuloma venereum isolates.</title>
        <authorList>
            <person name="Thomson N.R."/>
            <person name="Holden M.T.G."/>
            <person name="Carder C."/>
            <person name="Lennard N."/>
            <person name="Lockey S.J."/>
            <person name="Marsh P."/>
            <person name="Skipp P."/>
            <person name="O'Connor C.D."/>
            <person name="Goodhead I."/>
            <person name="Norbertzcak H."/>
            <person name="Harris B."/>
            <person name="Ormond D."/>
            <person name="Rance R."/>
            <person name="Quail M.A."/>
            <person name="Parkhill J."/>
            <person name="Stephens R.S."/>
            <person name="Clarke I.N."/>
        </authorList>
    </citation>
    <scope>NUCLEOTIDE SEQUENCE [LARGE SCALE GENOMIC DNA]</scope>
    <source>
        <strain>ATCC VR-902B / DSM 19102 / 434/Bu</strain>
    </source>
</reference>
<keyword id="KW-0004">4Fe-4S</keyword>
<keyword id="KW-0408">Iron</keyword>
<keyword id="KW-0411">Iron-sulfur</keyword>
<keyword id="KW-0414">Isoprene biosynthesis</keyword>
<keyword id="KW-0479">Metal-binding</keyword>
<keyword id="KW-0560">Oxidoreductase</keyword>
<protein>
    <recommendedName>
        <fullName evidence="1">4-hydroxy-3-methylbut-2-enyl diphosphate reductase</fullName>
        <shortName evidence="1">HMBPP reductase</shortName>
        <ecNumber evidence="1">1.17.7.4</ecNumber>
    </recommendedName>
</protein>
<sequence>MRKIILCSPRGFCAGVIRAIQTVEVALEKWGRPIYVKHEIVHNRHVVDKLREKGAIFIEDLQEVPRNSRVIFSAHGVPPSLREEATERGLIAIDATCGLVTKVHSAVKMYAKKGYHIILIGKRKHVEIIGIRGEAPDQITVVENIAEVEALPFSAQDPLFYVTQTTLSMDDAADIVAALKARYPRIFTLPSSSICYATQNRQGALRNILPQVDFVYVIGDRQSSNSNRLREVAERRGVTARLVNHPDEVTEEILQYSGNIGITAGASTPEDVVQACLMKLQELIPDLSIEMDLFVEEDTVFQLPKEL</sequence>
<proteinExistence type="inferred from homology"/>
<evidence type="ECO:0000255" key="1">
    <source>
        <dbReference type="HAMAP-Rule" id="MF_00191"/>
    </source>
</evidence>
<name>ISPH_CHLT2</name>
<dbReference type="EC" id="1.17.7.4" evidence="1"/>
<dbReference type="EMBL" id="AM884176">
    <property type="protein sequence ID" value="CAP03678.1"/>
    <property type="molecule type" value="Genomic_DNA"/>
</dbReference>
<dbReference type="RefSeq" id="WP_009873464.1">
    <property type="nucleotide sequence ID" value="NC_010287.1"/>
</dbReference>
<dbReference type="RefSeq" id="YP_001654323.1">
    <property type="nucleotide sequence ID" value="NC_010287.1"/>
</dbReference>
<dbReference type="SMR" id="B0B991"/>
<dbReference type="KEGG" id="ctb:CTL0234"/>
<dbReference type="PATRIC" id="fig|471472.4.peg.253"/>
<dbReference type="HOGENOM" id="CLU_027486_1_0_0"/>
<dbReference type="UniPathway" id="UPA00056">
    <property type="reaction ID" value="UER00097"/>
</dbReference>
<dbReference type="UniPathway" id="UPA00059">
    <property type="reaction ID" value="UER00105"/>
</dbReference>
<dbReference type="Proteomes" id="UP001154402">
    <property type="component" value="Chromosome"/>
</dbReference>
<dbReference type="GO" id="GO:0051539">
    <property type="term" value="F:4 iron, 4 sulfur cluster binding"/>
    <property type="evidence" value="ECO:0007669"/>
    <property type="project" value="UniProtKB-UniRule"/>
</dbReference>
<dbReference type="GO" id="GO:0051745">
    <property type="term" value="F:4-hydroxy-3-methylbut-2-enyl diphosphate reductase activity"/>
    <property type="evidence" value="ECO:0007669"/>
    <property type="project" value="UniProtKB-UniRule"/>
</dbReference>
<dbReference type="GO" id="GO:0046872">
    <property type="term" value="F:metal ion binding"/>
    <property type="evidence" value="ECO:0007669"/>
    <property type="project" value="UniProtKB-KW"/>
</dbReference>
<dbReference type="GO" id="GO:0050992">
    <property type="term" value="P:dimethylallyl diphosphate biosynthetic process"/>
    <property type="evidence" value="ECO:0007669"/>
    <property type="project" value="UniProtKB-UniRule"/>
</dbReference>
<dbReference type="GO" id="GO:0019288">
    <property type="term" value="P:isopentenyl diphosphate biosynthetic process, methylerythritol 4-phosphate pathway"/>
    <property type="evidence" value="ECO:0007669"/>
    <property type="project" value="UniProtKB-UniRule"/>
</dbReference>
<dbReference type="GO" id="GO:0016114">
    <property type="term" value="P:terpenoid biosynthetic process"/>
    <property type="evidence" value="ECO:0007669"/>
    <property type="project" value="UniProtKB-UniRule"/>
</dbReference>
<dbReference type="CDD" id="cd13944">
    <property type="entry name" value="lytB_ispH"/>
    <property type="match status" value="1"/>
</dbReference>
<dbReference type="Gene3D" id="3.40.50.11270">
    <property type="match status" value="1"/>
</dbReference>
<dbReference type="Gene3D" id="3.40.1010.20">
    <property type="entry name" value="4-hydroxy-3-methylbut-2-enyl diphosphate reductase, catalytic domain"/>
    <property type="match status" value="2"/>
</dbReference>
<dbReference type="HAMAP" id="MF_00191">
    <property type="entry name" value="IspH"/>
    <property type="match status" value="1"/>
</dbReference>
<dbReference type="InterPro" id="IPR003451">
    <property type="entry name" value="LytB/IspH"/>
</dbReference>
<dbReference type="NCBIfam" id="TIGR00216">
    <property type="entry name" value="ispH_lytB"/>
    <property type="match status" value="1"/>
</dbReference>
<dbReference type="NCBIfam" id="NF002190">
    <property type="entry name" value="PRK01045.1-4"/>
    <property type="match status" value="1"/>
</dbReference>
<dbReference type="PANTHER" id="PTHR30426">
    <property type="entry name" value="4-HYDROXY-3-METHYLBUT-2-ENYL DIPHOSPHATE REDUCTASE"/>
    <property type="match status" value="1"/>
</dbReference>
<dbReference type="PANTHER" id="PTHR30426:SF0">
    <property type="entry name" value="4-HYDROXY-3-METHYLBUT-2-ENYL DIPHOSPHATE REDUCTASE"/>
    <property type="match status" value="1"/>
</dbReference>
<dbReference type="Pfam" id="PF02401">
    <property type="entry name" value="LYTB"/>
    <property type="match status" value="1"/>
</dbReference>
<comment type="function">
    <text evidence="1">Catalyzes the conversion of 1-hydroxy-2-methyl-2-(E)-butenyl 4-diphosphate (HMBPP) into a mixture of isopentenyl diphosphate (IPP) and dimethylallyl diphosphate (DMAPP). Acts in the terminal step of the DOXP/MEP pathway for isoprenoid precursor biosynthesis.</text>
</comment>
<comment type="catalytic activity">
    <reaction evidence="1">
        <text>isopentenyl diphosphate + 2 oxidized [2Fe-2S]-[ferredoxin] + H2O = (2E)-4-hydroxy-3-methylbut-2-enyl diphosphate + 2 reduced [2Fe-2S]-[ferredoxin] + 2 H(+)</text>
        <dbReference type="Rhea" id="RHEA:24488"/>
        <dbReference type="Rhea" id="RHEA-COMP:10000"/>
        <dbReference type="Rhea" id="RHEA-COMP:10001"/>
        <dbReference type="ChEBI" id="CHEBI:15377"/>
        <dbReference type="ChEBI" id="CHEBI:15378"/>
        <dbReference type="ChEBI" id="CHEBI:33737"/>
        <dbReference type="ChEBI" id="CHEBI:33738"/>
        <dbReference type="ChEBI" id="CHEBI:128753"/>
        <dbReference type="ChEBI" id="CHEBI:128769"/>
        <dbReference type="EC" id="1.17.7.4"/>
    </reaction>
</comment>
<comment type="catalytic activity">
    <reaction evidence="1">
        <text>dimethylallyl diphosphate + 2 oxidized [2Fe-2S]-[ferredoxin] + H2O = (2E)-4-hydroxy-3-methylbut-2-enyl diphosphate + 2 reduced [2Fe-2S]-[ferredoxin] + 2 H(+)</text>
        <dbReference type="Rhea" id="RHEA:24825"/>
        <dbReference type="Rhea" id="RHEA-COMP:10000"/>
        <dbReference type="Rhea" id="RHEA-COMP:10001"/>
        <dbReference type="ChEBI" id="CHEBI:15377"/>
        <dbReference type="ChEBI" id="CHEBI:15378"/>
        <dbReference type="ChEBI" id="CHEBI:33737"/>
        <dbReference type="ChEBI" id="CHEBI:33738"/>
        <dbReference type="ChEBI" id="CHEBI:57623"/>
        <dbReference type="ChEBI" id="CHEBI:128753"/>
        <dbReference type="EC" id="1.17.7.4"/>
    </reaction>
</comment>
<comment type="cofactor">
    <cofactor evidence="1">
        <name>[4Fe-4S] cluster</name>
        <dbReference type="ChEBI" id="CHEBI:49883"/>
    </cofactor>
    <text evidence="1">Binds 1 [4Fe-4S] cluster per subunit.</text>
</comment>
<comment type="pathway">
    <text evidence="1">Isoprenoid biosynthesis; dimethylallyl diphosphate biosynthesis; dimethylallyl diphosphate from (2E)-4-hydroxy-3-methylbutenyl diphosphate: step 1/1.</text>
</comment>
<comment type="pathway">
    <text evidence="1">Isoprenoid biosynthesis; isopentenyl diphosphate biosynthesis via DXP pathway; isopentenyl diphosphate from 1-deoxy-D-xylulose 5-phosphate: step 6/6.</text>
</comment>
<comment type="similarity">
    <text evidence="1">Belongs to the IspH family.</text>
</comment>
<gene>
    <name evidence="1" type="primary">ispH</name>
    <name type="ordered locus">CTL0234</name>
</gene>
<accession>B0B991</accession>
<organism>
    <name type="scientific">Chlamydia trachomatis serovar L2 (strain ATCC VR-902B / DSM 19102 / 434/Bu)</name>
    <dbReference type="NCBI Taxonomy" id="471472"/>
    <lineage>
        <taxon>Bacteria</taxon>
        <taxon>Pseudomonadati</taxon>
        <taxon>Chlamydiota</taxon>
        <taxon>Chlamydiia</taxon>
        <taxon>Chlamydiales</taxon>
        <taxon>Chlamydiaceae</taxon>
        <taxon>Chlamydia/Chlamydophila group</taxon>
        <taxon>Chlamydia</taxon>
    </lineage>
</organism>